<protein>
    <recommendedName>
        <fullName evidence="1">Xylose isomerase</fullName>
        <ecNumber evidence="1">5.3.1.5</ecNumber>
    </recommendedName>
</protein>
<proteinExistence type="inferred from homology"/>
<dbReference type="EC" id="5.3.1.5" evidence="1"/>
<dbReference type="EMBL" id="CP001053">
    <property type="protein sequence ID" value="ACD20931.1"/>
    <property type="molecule type" value="Genomic_DNA"/>
</dbReference>
<dbReference type="RefSeq" id="WP_012428431.1">
    <property type="nucleotide sequence ID" value="NC_010676.1"/>
</dbReference>
<dbReference type="SMR" id="B2T929"/>
<dbReference type="STRING" id="398527.Bphyt_6633"/>
<dbReference type="KEGG" id="bpy:Bphyt_6633"/>
<dbReference type="eggNOG" id="COG2115">
    <property type="taxonomic scope" value="Bacteria"/>
</dbReference>
<dbReference type="HOGENOM" id="CLU_037261_1_0_4"/>
<dbReference type="OrthoDB" id="9763981at2"/>
<dbReference type="Proteomes" id="UP000001739">
    <property type="component" value="Chromosome 2"/>
</dbReference>
<dbReference type="GO" id="GO:0005737">
    <property type="term" value="C:cytoplasm"/>
    <property type="evidence" value="ECO:0007669"/>
    <property type="project" value="UniProtKB-SubCell"/>
</dbReference>
<dbReference type="GO" id="GO:0000287">
    <property type="term" value="F:magnesium ion binding"/>
    <property type="evidence" value="ECO:0007669"/>
    <property type="project" value="UniProtKB-UniRule"/>
</dbReference>
<dbReference type="GO" id="GO:0009045">
    <property type="term" value="F:xylose isomerase activity"/>
    <property type="evidence" value="ECO:0007669"/>
    <property type="project" value="UniProtKB-UniRule"/>
</dbReference>
<dbReference type="GO" id="GO:0042732">
    <property type="term" value="P:D-xylose metabolic process"/>
    <property type="evidence" value="ECO:0007669"/>
    <property type="project" value="UniProtKB-UniRule"/>
</dbReference>
<dbReference type="FunFam" id="3.20.20.150:FF:000002">
    <property type="entry name" value="Xylose isomerase"/>
    <property type="match status" value="1"/>
</dbReference>
<dbReference type="Gene3D" id="3.20.20.150">
    <property type="entry name" value="Divalent-metal-dependent TIM barrel enzymes"/>
    <property type="match status" value="1"/>
</dbReference>
<dbReference type="HAMAP" id="MF_00455">
    <property type="entry name" value="Xylose_isom_A"/>
    <property type="match status" value="1"/>
</dbReference>
<dbReference type="InterPro" id="IPR036237">
    <property type="entry name" value="Xyl_isomerase-like_sf"/>
</dbReference>
<dbReference type="InterPro" id="IPR013022">
    <property type="entry name" value="Xyl_isomerase-like_TIM-brl"/>
</dbReference>
<dbReference type="InterPro" id="IPR013452">
    <property type="entry name" value="Xylose_isom_bac"/>
</dbReference>
<dbReference type="InterPro" id="IPR001998">
    <property type="entry name" value="Xylose_isomerase"/>
</dbReference>
<dbReference type="NCBIfam" id="NF003998">
    <property type="entry name" value="PRK05474.1"/>
    <property type="match status" value="1"/>
</dbReference>
<dbReference type="NCBIfam" id="TIGR02630">
    <property type="entry name" value="xylose_isom_A"/>
    <property type="match status" value="1"/>
</dbReference>
<dbReference type="PANTHER" id="PTHR48408">
    <property type="match status" value="1"/>
</dbReference>
<dbReference type="PANTHER" id="PTHR48408:SF1">
    <property type="entry name" value="XYLOSE ISOMERASE"/>
    <property type="match status" value="1"/>
</dbReference>
<dbReference type="Pfam" id="PF01261">
    <property type="entry name" value="AP_endonuc_2"/>
    <property type="match status" value="1"/>
</dbReference>
<dbReference type="PRINTS" id="PR00688">
    <property type="entry name" value="XYLOSISMRASE"/>
</dbReference>
<dbReference type="SUPFAM" id="SSF51658">
    <property type="entry name" value="Xylose isomerase-like"/>
    <property type="match status" value="1"/>
</dbReference>
<dbReference type="PROSITE" id="PS51415">
    <property type="entry name" value="XYLOSE_ISOMERASE"/>
    <property type="match status" value="1"/>
</dbReference>
<sequence length="440" mass="49734">MSYFEHIPEIRYEGPQSDNPLAYRHYDKSKKVLGKTLEEHLRIAVCYWHTFVWPGVDIFGQGTFRRPWQQAGDAMERAQQKADSAFEFFSKLGTPYYTFHDTDVSPEGSNLKEYSENFLRITDYLARKQESTGIKLLWGTANLFSHPRYAAGAATSPDPEVFAFAATQVRHALDATQRLGGDNYVLWGGREGYDTLLNTDLVRERDQLARFLHMVVDHAHKIGFKGSLLIEPKPQEPTKHQYDYDVATVHGFLLQHGLDKEIRVNIEANHATLAGHSFHHEIATAYALGIFGSVDANRGDPQNGWDTDQFPNSVEELTLAFYEILKHGGFTTGGMNFDSKVRRQSVDPEDLFYGHIGAIDNLALAVERAAVLIENDRLDQFKRQRYSGWDAEFGRKISSGDYSLSALAEEAMARGLNPQHASGHQELMENIVNQAIYSGR</sequence>
<comment type="catalytic activity">
    <reaction evidence="1">
        <text>alpha-D-xylose = alpha-D-xylulofuranose</text>
        <dbReference type="Rhea" id="RHEA:22816"/>
        <dbReference type="ChEBI" id="CHEBI:28518"/>
        <dbReference type="ChEBI" id="CHEBI:188998"/>
        <dbReference type="EC" id="5.3.1.5"/>
    </reaction>
</comment>
<comment type="cofactor">
    <cofactor evidence="1">
        <name>Mg(2+)</name>
        <dbReference type="ChEBI" id="CHEBI:18420"/>
    </cofactor>
    <text evidence="1">Binds 2 magnesium ions per subunit.</text>
</comment>
<comment type="subunit">
    <text evidence="1">Homotetramer.</text>
</comment>
<comment type="subcellular location">
    <subcellularLocation>
        <location evidence="1">Cytoplasm</location>
    </subcellularLocation>
</comment>
<comment type="similarity">
    <text evidence="1">Belongs to the xylose isomerase family.</text>
</comment>
<accession>B2T929</accession>
<name>XYLA_PARPJ</name>
<gene>
    <name evidence="1" type="primary">xylA</name>
    <name type="ordered locus">Bphyt_6633</name>
</gene>
<evidence type="ECO:0000255" key="1">
    <source>
        <dbReference type="HAMAP-Rule" id="MF_00455"/>
    </source>
</evidence>
<reference key="1">
    <citation type="journal article" date="2011" name="J. Bacteriol.">
        <title>Complete genome sequence of the plant growth-promoting endophyte Burkholderia phytofirmans strain PsJN.</title>
        <authorList>
            <person name="Weilharter A."/>
            <person name="Mitter B."/>
            <person name="Shin M.V."/>
            <person name="Chain P.S."/>
            <person name="Nowak J."/>
            <person name="Sessitsch A."/>
        </authorList>
    </citation>
    <scope>NUCLEOTIDE SEQUENCE [LARGE SCALE GENOMIC DNA]</scope>
    <source>
        <strain>DSM 17436 / LMG 22146 / PsJN</strain>
    </source>
</reference>
<keyword id="KW-0119">Carbohydrate metabolism</keyword>
<keyword id="KW-0963">Cytoplasm</keyword>
<keyword id="KW-0413">Isomerase</keyword>
<keyword id="KW-0460">Magnesium</keyword>
<keyword id="KW-0479">Metal-binding</keyword>
<keyword id="KW-0859">Xylose metabolism</keyword>
<feature type="chain" id="PRO_1000200286" description="Xylose isomerase">
    <location>
        <begin position="1"/>
        <end position="440"/>
    </location>
</feature>
<feature type="active site" evidence="1">
    <location>
        <position position="100"/>
    </location>
</feature>
<feature type="active site" evidence="1">
    <location>
        <position position="103"/>
    </location>
</feature>
<feature type="binding site" evidence="1">
    <location>
        <position position="231"/>
    </location>
    <ligand>
        <name>Mg(2+)</name>
        <dbReference type="ChEBI" id="CHEBI:18420"/>
        <label>1</label>
    </ligand>
</feature>
<feature type="binding site" evidence="1">
    <location>
        <position position="267"/>
    </location>
    <ligand>
        <name>Mg(2+)</name>
        <dbReference type="ChEBI" id="CHEBI:18420"/>
        <label>1</label>
    </ligand>
</feature>
<feature type="binding site" evidence="1">
    <location>
        <position position="267"/>
    </location>
    <ligand>
        <name>Mg(2+)</name>
        <dbReference type="ChEBI" id="CHEBI:18420"/>
        <label>2</label>
    </ligand>
</feature>
<feature type="binding site" evidence="1">
    <location>
        <position position="270"/>
    </location>
    <ligand>
        <name>Mg(2+)</name>
        <dbReference type="ChEBI" id="CHEBI:18420"/>
        <label>2</label>
    </ligand>
</feature>
<feature type="binding site" evidence="1">
    <location>
        <position position="295"/>
    </location>
    <ligand>
        <name>Mg(2+)</name>
        <dbReference type="ChEBI" id="CHEBI:18420"/>
        <label>1</label>
    </ligand>
</feature>
<feature type="binding site" evidence="1">
    <location>
        <position position="306"/>
    </location>
    <ligand>
        <name>Mg(2+)</name>
        <dbReference type="ChEBI" id="CHEBI:18420"/>
        <label>2</label>
    </ligand>
</feature>
<feature type="binding site" evidence="1">
    <location>
        <position position="308"/>
    </location>
    <ligand>
        <name>Mg(2+)</name>
        <dbReference type="ChEBI" id="CHEBI:18420"/>
        <label>2</label>
    </ligand>
</feature>
<feature type="binding site" evidence="1">
    <location>
        <position position="338"/>
    </location>
    <ligand>
        <name>Mg(2+)</name>
        <dbReference type="ChEBI" id="CHEBI:18420"/>
        <label>1</label>
    </ligand>
</feature>
<organism>
    <name type="scientific">Paraburkholderia phytofirmans (strain DSM 17436 / LMG 22146 / PsJN)</name>
    <name type="common">Burkholderia phytofirmans</name>
    <dbReference type="NCBI Taxonomy" id="398527"/>
    <lineage>
        <taxon>Bacteria</taxon>
        <taxon>Pseudomonadati</taxon>
        <taxon>Pseudomonadota</taxon>
        <taxon>Betaproteobacteria</taxon>
        <taxon>Burkholderiales</taxon>
        <taxon>Burkholderiaceae</taxon>
        <taxon>Paraburkholderia</taxon>
    </lineage>
</organism>